<protein>
    <recommendedName>
        <fullName evidence="1">Serine hydroxymethyltransferase</fullName>
        <shortName evidence="1">SHMT</shortName>
        <shortName evidence="1">Serine methylase</shortName>
        <ecNumber evidence="1">2.1.2.1</ecNumber>
    </recommendedName>
</protein>
<comment type="function">
    <text evidence="1">Catalyzes the reversible interconversion of serine and glycine with tetrahydrofolate (THF) serving as the one-carbon carrier. This reaction serves as the major source of one-carbon groups required for the biosynthesis of purines, thymidylate, methionine, and other important biomolecules. Also exhibits THF-independent aldolase activity toward beta-hydroxyamino acids, producing glycine and aldehydes, via a retro-aldol mechanism.</text>
</comment>
<comment type="catalytic activity">
    <reaction evidence="1">
        <text>(6R)-5,10-methylene-5,6,7,8-tetrahydrofolate + glycine + H2O = (6S)-5,6,7,8-tetrahydrofolate + L-serine</text>
        <dbReference type="Rhea" id="RHEA:15481"/>
        <dbReference type="ChEBI" id="CHEBI:15377"/>
        <dbReference type="ChEBI" id="CHEBI:15636"/>
        <dbReference type="ChEBI" id="CHEBI:33384"/>
        <dbReference type="ChEBI" id="CHEBI:57305"/>
        <dbReference type="ChEBI" id="CHEBI:57453"/>
        <dbReference type="EC" id="2.1.2.1"/>
    </reaction>
</comment>
<comment type="cofactor">
    <cofactor evidence="1">
        <name>pyridoxal 5'-phosphate</name>
        <dbReference type="ChEBI" id="CHEBI:597326"/>
    </cofactor>
</comment>
<comment type="pathway">
    <text evidence="1">One-carbon metabolism; tetrahydrofolate interconversion.</text>
</comment>
<comment type="pathway">
    <text evidence="1">Amino-acid biosynthesis; glycine biosynthesis; glycine from L-serine: step 1/1.</text>
</comment>
<comment type="subunit">
    <text evidence="1">Homodimer.</text>
</comment>
<comment type="subcellular location">
    <subcellularLocation>
        <location evidence="1">Cytoplasm</location>
    </subcellularLocation>
</comment>
<comment type="similarity">
    <text evidence="1">Belongs to the SHMT family.</text>
</comment>
<evidence type="ECO:0000255" key="1">
    <source>
        <dbReference type="HAMAP-Rule" id="MF_00051"/>
    </source>
</evidence>
<name>GLYA_HERA2</name>
<proteinExistence type="inferred from homology"/>
<sequence>MSLMDVLRQQDPDLAQAIDSEAERQRHGIELIASENYVSSAVLAAQGSVLTNKYAEGYPRKRYYGGCEFVDVAEDLAIKRAKQLFGAEHVNVQPHSGAQANMAVQLATLEHGDRVLGMSLAHGGHLTHGHPLNFSGKSYEIHGYGVDRETEQIDYEEVAEIAHKTQPKMIICGASAYPRNINFDLLRTIADNVGAILMADIAHIAGLVAAGLHPSPIGVAQYVTTTTHKTLRGPRGGMIMCSAEHGKNIDKTVFPGVQGGPLMHVIAAKAVAFGEALQPEYRDYMRRVVENAKVLAEALTNEGLRIVSGGTDNHLLLVDLTPVNATGKDAEKALDHAGITVNKNAIPFDPKPPMTASGLRFGTPAATTRGFGPNEMRQIAVWVGQIVRELGNKSLQAKIAGEVRELCAAFPVPGQPEYV</sequence>
<keyword id="KW-0028">Amino-acid biosynthesis</keyword>
<keyword id="KW-0963">Cytoplasm</keyword>
<keyword id="KW-0554">One-carbon metabolism</keyword>
<keyword id="KW-0663">Pyridoxal phosphate</keyword>
<keyword id="KW-0808">Transferase</keyword>
<accession>A9AYB7</accession>
<organism>
    <name type="scientific">Herpetosiphon aurantiacus (strain ATCC 23779 / DSM 785 / 114-95)</name>
    <dbReference type="NCBI Taxonomy" id="316274"/>
    <lineage>
        <taxon>Bacteria</taxon>
        <taxon>Bacillati</taxon>
        <taxon>Chloroflexota</taxon>
        <taxon>Chloroflexia</taxon>
        <taxon>Herpetosiphonales</taxon>
        <taxon>Herpetosiphonaceae</taxon>
        <taxon>Herpetosiphon</taxon>
    </lineage>
</organism>
<feature type="chain" id="PRO_0000369928" description="Serine hydroxymethyltransferase">
    <location>
        <begin position="1"/>
        <end position="419"/>
    </location>
</feature>
<feature type="binding site" evidence="1">
    <location>
        <position position="120"/>
    </location>
    <ligand>
        <name>(6S)-5,6,7,8-tetrahydrofolate</name>
        <dbReference type="ChEBI" id="CHEBI:57453"/>
    </ligand>
</feature>
<feature type="binding site" evidence="1">
    <location>
        <begin position="124"/>
        <end position="126"/>
    </location>
    <ligand>
        <name>(6S)-5,6,7,8-tetrahydrofolate</name>
        <dbReference type="ChEBI" id="CHEBI:57453"/>
    </ligand>
</feature>
<feature type="site" description="Plays an important role in substrate specificity" evidence="1">
    <location>
        <position position="228"/>
    </location>
</feature>
<feature type="modified residue" description="N6-(pyridoxal phosphate)lysine" evidence="1">
    <location>
        <position position="229"/>
    </location>
</feature>
<dbReference type="EC" id="2.1.2.1" evidence="1"/>
<dbReference type="EMBL" id="CP000875">
    <property type="protein sequence ID" value="ABX03499.1"/>
    <property type="molecule type" value="Genomic_DNA"/>
</dbReference>
<dbReference type="SMR" id="A9AYB7"/>
<dbReference type="FunCoup" id="A9AYB7">
    <property type="interactions" value="510"/>
</dbReference>
<dbReference type="STRING" id="316274.Haur_0851"/>
<dbReference type="KEGG" id="hau:Haur_0851"/>
<dbReference type="eggNOG" id="COG0112">
    <property type="taxonomic scope" value="Bacteria"/>
</dbReference>
<dbReference type="HOGENOM" id="CLU_022477_2_1_0"/>
<dbReference type="InParanoid" id="A9AYB7"/>
<dbReference type="UniPathway" id="UPA00193"/>
<dbReference type="UniPathway" id="UPA00288">
    <property type="reaction ID" value="UER01023"/>
</dbReference>
<dbReference type="Proteomes" id="UP000000787">
    <property type="component" value="Chromosome"/>
</dbReference>
<dbReference type="GO" id="GO:0005829">
    <property type="term" value="C:cytosol"/>
    <property type="evidence" value="ECO:0007669"/>
    <property type="project" value="TreeGrafter"/>
</dbReference>
<dbReference type="GO" id="GO:0004372">
    <property type="term" value="F:glycine hydroxymethyltransferase activity"/>
    <property type="evidence" value="ECO:0007669"/>
    <property type="project" value="UniProtKB-UniRule"/>
</dbReference>
<dbReference type="GO" id="GO:0030170">
    <property type="term" value="F:pyridoxal phosphate binding"/>
    <property type="evidence" value="ECO:0007669"/>
    <property type="project" value="UniProtKB-UniRule"/>
</dbReference>
<dbReference type="GO" id="GO:0019264">
    <property type="term" value="P:glycine biosynthetic process from serine"/>
    <property type="evidence" value="ECO:0007669"/>
    <property type="project" value="UniProtKB-UniRule"/>
</dbReference>
<dbReference type="GO" id="GO:0035999">
    <property type="term" value="P:tetrahydrofolate interconversion"/>
    <property type="evidence" value="ECO:0007669"/>
    <property type="project" value="UniProtKB-UniRule"/>
</dbReference>
<dbReference type="CDD" id="cd00378">
    <property type="entry name" value="SHMT"/>
    <property type="match status" value="1"/>
</dbReference>
<dbReference type="FunFam" id="3.40.640.10:FF:000001">
    <property type="entry name" value="Serine hydroxymethyltransferase"/>
    <property type="match status" value="1"/>
</dbReference>
<dbReference type="Gene3D" id="3.90.1150.10">
    <property type="entry name" value="Aspartate Aminotransferase, domain 1"/>
    <property type="match status" value="1"/>
</dbReference>
<dbReference type="Gene3D" id="3.40.640.10">
    <property type="entry name" value="Type I PLP-dependent aspartate aminotransferase-like (Major domain)"/>
    <property type="match status" value="1"/>
</dbReference>
<dbReference type="HAMAP" id="MF_00051">
    <property type="entry name" value="SHMT"/>
    <property type="match status" value="1"/>
</dbReference>
<dbReference type="InterPro" id="IPR015424">
    <property type="entry name" value="PyrdxlP-dep_Trfase"/>
</dbReference>
<dbReference type="InterPro" id="IPR015421">
    <property type="entry name" value="PyrdxlP-dep_Trfase_major"/>
</dbReference>
<dbReference type="InterPro" id="IPR015422">
    <property type="entry name" value="PyrdxlP-dep_Trfase_small"/>
</dbReference>
<dbReference type="InterPro" id="IPR001085">
    <property type="entry name" value="Ser_HO-MeTrfase"/>
</dbReference>
<dbReference type="InterPro" id="IPR049943">
    <property type="entry name" value="Ser_HO-MeTrfase-like"/>
</dbReference>
<dbReference type="InterPro" id="IPR019798">
    <property type="entry name" value="Ser_HO-MeTrfase_PLP_BS"/>
</dbReference>
<dbReference type="InterPro" id="IPR039429">
    <property type="entry name" value="SHMT-like_dom"/>
</dbReference>
<dbReference type="NCBIfam" id="NF000586">
    <property type="entry name" value="PRK00011.1"/>
    <property type="match status" value="1"/>
</dbReference>
<dbReference type="PANTHER" id="PTHR11680">
    <property type="entry name" value="SERINE HYDROXYMETHYLTRANSFERASE"/>
    <property type="match status" value="1"/>
</dbReference>
<dbReference type="PANTHER" id="PTHR11680:SF35">
    <property type="entry name" value="SERINE HYDROXYMETHYLTRANSFERASE 1"/>
    <property type="match status" value="1"/>
</dbReference>
<dbReference type="Pfam" id="PF00464">
    <property type="entry name" value="SHMT"/>
    <property type="match status" value="1"/>
</dbReference>
<dbReference type="PIRSF" id="PIRSF000412">
    <property type="entry name" value="SHMT"/>
    <property type="match status" value="1"/>
</dbReference>
<dbReference type="SUPFAM" id="SSF53383">
    <property type="entry name" value="PLP-dependent transferases"/>
    <property type="match status" value="1"/>
</dbReference>
<dbReference type="PROSITE" id="PS00096">
    <property type="entry name" value="SHMT"/>
    <property type="match status" value="1"/>
</dbReference>
<gene>
    <name evidence="1" type="primary">glyA</name>
    <name type="ordered locus">Haur_0851</name>
</gene>
<reference key="1">
    <citation type="journal article" date="2011" name="Stand. Genomic Sci.">
        <title>Complete genome sequence of the filamentous gliding predatory bacterium Herpetosiphon aurantiacus type strain (114-95(T)).</title>
        <authorList>
            <person name="Kiss H."/>
            <person name="Nett M."/>
            <person name="Domin N."/>
            <person name="Martin K."/>
            <person name="Maresca J.A."/>
            <person name="Copeland A."/>
            <person name="Lapidus A."/>
            <person name="Lucas S."/>
            <person name="Berry K.W."/>
            <person name="Glavina Del Rio T."/>
            <person name="Dalin E."/>
            <person name="Tice H."/>
            <person name="Pitluck S."/>
            <person name="Richardson P."/>
            <person name="Bruce D."/>
            <person name="Goodwin L."/>
            <person name="Han C."/>
            <person name="Detter J.C."/>
            <person name="Schmutz J."/>
            <person name="Brettin T."/>
            <person name="Land M."/>
            <person name="Hauser L."/>
            <person name="Kyrpides N.C."/>
            <person name="Ivanova N."/>
            <person name="Goeker M."/>
            <person name="Woyke T."/>
            <person name="Klenk H.P."/>
            <person name="Bryant D.A."/>
        </authorList>
    </citation>
    <scope>NUCLEOTIDE SEQUENCE [LARGE SCALE GENOMIC DNA]</scope>
    <source>
        <strain>ATCC 23779 / DSM 785 / 114-95</strain>
    </source>
</reference>